<keyword id="KW-1185">Reference proteome</keyword>
<keyword id="KW-0687">Ribonucleoprotein</keyword>
<keyword id="KW-0689">Ribosomal protein</keyword>
<accession>Q3J4W8</accession>
<gene>
    <name evidence="1" type="primary">rpmB</name>
    <name type="ordered locus">RHOS4_05980</name>
    <name type="ORF">RSP_2016</name>
</gene>
<comment type="similarity">
    <text evidence="1">Belongs to the bacterial ribosomal protein bL28 family.</text>
</comment>
<proteinExistence type="inferred from homology"/>
<evidence type="ECO:0000255" key="1">
    <source>
        <dbReference type="HAMAP-Rule" id="MF_00373"/>
    </source>
</evidence>
<evidence type="ECO:0000256" key="2">
    <source>
        <dbReference type="SAM" id="MobiDB-lite"/>
    </source>
</evidence>
<evidence type="ECO:0000305" key="3"/>
<sequence length="96" mass="10392">MSRVCELSGKAPMTGNTVSHANNKSRRRFLPNLNDVTLISDVLGQSFKLRISAAALRTVDHRGGLDAFLAKAKDDELSVKARAIKKEIEKAQATAA</sequence>
<name>RL28_CERS4</name>
<reference key="1">
    <citation type="submission" date="2005-09" db="EMBL/GenBank/DDBJ databases">
        <title>Complete sequence of chromosome 1 of Rhodobacter sphaeroides 2.4.1.</title>
        <authorList>
            <person name="Copeland A."/>
            <person name="Lucas S."/>
            <person name="Lapidus A."/>
            <person name="Barry K."/>
            <person name="Detter J.C."/>
            <person name="Glavina T."/>
            <person name="Hammon N."/>
            <person name="Israni S."/>
            <person name="Pitluck S."/>
            <person name="Richardson P."/>
            <person name="Mackenzie C."/>
            <person name="Choudhary M."/>
            <person name="Larimer F."/>
            <person name="Hauser L.J."/>
            <person name="Land M."/>
            <person name="Donohue T.J."/>
            <person name="Kaplan S."/>
        </authorList>
    </citation>
    <scope>NUCLEOTIDE SEQUENCE [LARGE SCALE GENOMIC DNA]</scope>
    <source>
        <strain>ATCC 17023 / DSM 158 / JCM 6121 / CCUG 31486 / LMG 2827 / NBRC 12203 / NCIMB 8253 / ATH 2.4.1.</strain>
    </source>
</reference>
<dbReference type="EMBL" id="CP000143">
    <property type="protein sequence ID" value="ABA78166.1"/>
    <property type="molecule type" value="Genomic_DNA"/>
</dbReference>
<dbReference type="RefSeq" id="WP_011337158.1">
    <property type="nucleotide sequence ID" value="NZ_CP030271.1"/>
</dbReference>
<dbReference type="RefSeq" id="YP_352067.1">
    <property type="nucleotide sequence ID" value="NC_007493.2"/>
</dbReference>
<dbReference type="SMR" id="Q3J4W8"/>
<dbReference type="STRING" id="272943.RSP_2016"/>
<dbReference type="DNASU" id="3719349"/>
<dbReference type="EnsemblBacteria" id="ABA78166">
    <property type="protein sequence ID" value="ABA78166"/>
    <property type="gene ID" value="RSP_2016"/>
</dbReference>
<dbReference type="GeneID" id="67445797"/>
<dbReference type="KEGG" id="rsp:RSP_2016"/>
<dbReference type="PATRIC" id="fig|272943.9.peg.906"/>
<dbReference type="eggNOG" id="COG0227">
    <property type="taxonomic scope" value="Bacteria"/>
</dbReference>
<dbReference type="OrthoDB" id="9805609at2"/>
<dbReference type="PhylomeDB" id="Q3J4W8"/>
<dbReference type="Proteomes" id="UP000002703">
    <property type="component" value="Chromosome 1"/>
</dbReference>
<dbReference type="GO" id="GO:0022625">
    <property type="term" value="C:cytosolic large ribosomal subunit"/>
    <property type="evidence" value="ECO:0007669"/>
    <property type="project" value="TreeGrafter"/>
</dbReference>
<dbReference type="GO" id="GO:0003735">
    <property type="term" value="F:structural constituent of ribosome"/>
    <property type="evidence" value="ECO:0007669"/>
    <property type="project" value="InterPro"/>
</dbReference>
<dbReference type="GO" id="GO:0006412">
    <property type="term" value="P:translation"/>
    <property type="evidence" value="ECO:0007669"/>
    <property type="project" value="UniProtKB-UniRule"/>
</dbReference>
<dbReference type="Gene3D" id="2.30.170.40">
    <property type="entry name" value="Ribosomal protein L28/L24"/>
    <property type="match status" value="1"/>
</dbReference>
<dbReference type="HAMAP" id="MF_00373">
    <property type="entry name" value="Ribosomal_bL28"/>
    <property type="match status" value="1"/>
</dbReference>
<dbReference type="InterPro" id="IPR026569">
    <property type="entry name" value="Ribosomal_bL28"/>
</dbReference>
<dbReference type="InterPro" id="IPR034704">
    <property type="entry name" value="Ribosomal_bL28/bL31-like_sf"/>
</dbReference>
<dbReference type="InterPro" id="IPR001383">
    <property type="entry name" value="Ribosomal_bL28_bact-type"/>
</dbReference>
<dbReference type="InterPro" id="IPR037147">
    <property type="entry name" value="Ribosomal_bL28_sf"/>
</dbReference>
<dbReference type="NCBIfam" id="TIGR00009">
    <property type="entry name" value="L28"/>
    <property type="match status" value="1"/>
</dbReference>
<dbReference type="PANTHER" id="PTHR13528">
    <property type="entry name" value="39S RIBOSOMAL PROTEIN L28, MITOCHONDRIAL"/>
    <property type="match status" value="1"/>
</dbReference>
<dbReference type="PANTHER" id="PTHR13528:SF2">
    <property type="entry name" value="LARGE RIBOSOMAL SUBUNIT PROTEIN BL28M"/>
    <property type="match status" value="1"/>
</dbReference>
<dbReference type="Pfam" id="PF00830">
    <property type="entry name" value="Ribosomal_L28"/>
    <property type="match status" value="1"/>
</dbReference>
<dbReference type="SUPFAM" id="SSF143800">
    <property type="entry name" value="L28p-like"/>
    <property type="match status" value="1"/>
</dbReference>
<feature type="chain" id="PRO_1000007334" description="Large ribosomal subunit protein bL28">
    <location>
        <begin position="1"/>
        <end position="96"/>
    </location>
</feature>
<feature type="region of interest" description="Disordered" evidence="2">
    <location>
        <begin position="1"/>
        <end position="23"/>
    </location>
</feature>
<organism>
    <name type="scientific">Cereibacter sphaeroides (strain ATCC 17023 / DSM 158 / JCM 6121 / CCUG 31486 / LMG 2827 / NBRC 12203 / NCIMB 8253 / ATH 2.4.1.)</name>
    <name type="common">Rhodobacter sphaeroides</name>
    <dbReference type="NCBI Taxonomy" id="272943"/>
    <lineage>
        <taxon>Bacteria</taxon>
        <taxon>Pseudomonadati</taxon>
        <taxon>Pseudomonadota</taxon>
        <taxon>Alphaproteobacteria</taxon>
        <taxon>Rhodobacterales</taxon>
        <taxon>Paracoccaceae</taxon>
        <taxon>Cereibacter</taxon>
    </lineage>
</organism>
<protein>
    <recommendedName>
        <fullName evidence="1">Large ribosomal subunit protein bL28</fullName>
    </recommendedName>
    <alternativeName>
        <fullName evidence="3">50S ribosomal protein L28</fullName>
    </alternativeName>
</protein>